<comment type="subcellular location">
    <subcellularLocation>
        <location evidence="1">Membrane</location>
        <topology evidence="1">Single-pass membrane protein</topology>
    </subcellularLocation>
</comment>
<accession>A0A1B0GUW6</accession>
<organism>
    <name type="scientific">Homo sapiens</name>
    <name type="common">Human</name>
    <dbReference type="NCBI Taxonomy" id="9606"/>
    <lineage>
        <taxon>Eukaryota</taxon>
        <taxon>Metazoa</taxon>
        <taxon>Chordata</taxon>
        <taxon>Craniata</taxon>
        <taxon>Vertebrata</taxon>
        <taxon>Euteleostomi</taxon>
        <taxon>Mammalia</taxon>
        <taxon>Eutheria</taxon>
        <taxon>Euarchontoglires</taxon>
        <taxon>Primates</taxon>
        <taxon>Haplorrhini</taxon>
        <taxon>Catarrhini</taxon>
        <taxon>Hominidae</taxon>
        <taxon>Homo</taxon>
    </lineage>
</organism>
<name>SPEM3_HUMAN</name>
<protein>
    <recommendedName>
        <fullName evidence="3">Uncharacterized protein SPEM3</fullName>
    </recommendedName>
</protein>
<sequence>MGERAYHGAQVCSGTNPRKCQDLGDSILLLLGSFILLNVWINVVTLLWKHLKSSLRILFRHFFPKDKQPSGSHPICICSSVDPKNLCSKVSSRVHPRPGFLLRRVNHLDSWIPDTNDEKVSACCCVPPKCGHAGVPRESARGLYKAGMMGGGEAPQVTASKAQASLLSRPETSSQFPKMSKLDTGPCHLPQESKTKTPDCAPAEAPAQAQVHSPTHTPVCTPTHPWTRSTDHTAVHTPAHSWTHSKARTPEGTHSQAQDTSAQAQAHTSAPTPAQTPAHIQAHTPAPTPAKASAHTKAHTSAQAQTHSPPHTPEYTHSQAHSPEHTSAHSPAQAPMPVPAHPQAHAPEYTSAHAPAYIPDHSHLVRSSVPVPTSAPAPPGTLAPATTPVLAPTPAPVPASAPSPAPALVMALTTTPVPDPVPATTPAPIITPIPSTPPAFSHDLSTGHVVYDARREKQNFFHMSSPQNPEYSRKDLATLFRPQEGQDLVSSGISEQTKQCSGDSAKLPAGSILGYLELRNMEWKNSDDAKDKFPQTKTSPYCSFHPCSSEKNTDSQAPFYPKFLAYSRDTACAKTCFHSATTAQSSVCTLPPPFTLSLPLVPPRSFVPPQPTNHQRPSTLIQTPTVLPTSKSPQSILTSQFPIPSLFATISQPLIQPQCPECHESLGLTQDSGLQRTPGPSKDSRVPRNLDLAQNPDLYKNPGLTQDPGLHENPGLAPNQGLHEFPGLPQDSYLCQNPSPSQDFGLHKNSGITQDSHPQKNTGLTQEAGILRSPCLTQSPGLHKKTPFTQTSDLQRSSGFTQDSGIYRNLEPNQETVIYKNQDLSQATDHQKNLGSSKDSGGHKNTGNVQDPGVCSTAGLTEDSGSQKGPYVPQDSEVNKSSGVIQESFLHKSPGLVQTSGLPKCSGLTQNSGDYKNPGLIQDCGGHKVKGLTQDSNLPSLTQATKVERRFSLPQDVGVYRSSEHSQDSNLHKCPGINQDPGPHKDPALVQDSGLPKISGLTQESGPYKSSCLIPDPSLYKNPSPALGSDFVQLLSLLQTPKSTLSLMKSSVPEKAAQKEDAQRHVLWARVQLNENSCPSKAQVVSNDLQTFSEVPVLIELQSSSWRAGSQHGAYRPVDTVPSGYQNYRQMSMPTHINWKSHCPGPGTQAGHVVFDARQRRLAVGKDKCEALSPRRLHQEAPSNSGKPSRSGDIRM</sequence>
<keyword id="KW-0472">Membrane</keyword>
<keyword id="KW-1267">Proteomics identification</keyword>
<keyword id="KW-1185">Reference proteome</keyword>
<keyword id="KW-0812">Transmembrane</keyword>
<keyword id="KW-1133">Transmembrane helix</keyword>
<dbReference type="EMBL" id="AC113189">
    <property type="status" value="NOT_ANNOTATED_CDS"/>
    <property type="molecule type" value="Genomic_DNA"/>
</dbReference>
<dbReference type="CCDS" id="CCDS92248.1"/>
<dbReference type="RefSeq" id="NP_001351637.1">
    <property type="nucleotide sequence ID" value="NM_001364708.1"/>
</dbReference>
<dbReference type="RefSeq" id="XP_011507026.1">
    <property type="nucleotide sequence ID" value="XM_011508724.2"/>
</dbReference>
<dbReference type="RefSeq" id="XP_011522098.1">
    <property type="nucleotide sequence ID" value="XM_011523796.2"/>
</dbReference>
<dbReference type="SMR" id="A0A1B0GUW6"/>
<dbReference type="FunCoup" id="A0A1B0GUW6">
    <property type="interactions" value="2"/>
</dbReference>
<dbReference type="STRING" id="9606.ENSP00000490274"/>
<dbReference type="GlyGen" id="A0A1B0GUW6">
    <property type="glycosylation" value="4 sites, 1 O-linked glycan (1 site)"/>
</dbReference>
<dbReference type="BioMuta" id="ENSG00000283439"/>
<dbReference type="jPOST" id="A0A1B0GUW6"/>
<dbReference type="MassIVE" id="A0A1B0GUW6"/>
<dbReference type="PeptideAtlas" id="A0A1B0GUW6"/>
<dbReference type="Ensembl" id="ENST00000636696.4">
    <property type="protein sequence ID" value="ENSP00000490274.1"/>
    <property type="gene ID" value="ENSG00000283439.4"/>
</dbReference>
<dbReference type="Ensembl" id="ENST00000640133.4">
    <property type="protein sequence ID" value="ENSP00000491037.1"/>
    <property type="gene ID" value="ENSG00000284090.4"/>
</dbReference>
<dbReference type="GeneID" id="107983988"/>
<dbReference type="MANE-Select" id="ENST00000636696.4">
    <property type="protein sequence ID" value="ENSP00000490274.1"/>
    <property type="RefSeq nucleotide sequence ID" value="NM_001364708.1"/>
    <property type="RefSeq protein sequence ID" value="NP_001351637.1"/>
</dbReference>
<dbReference type="AGR" id="HGNC:53651"/>
<dbReference type="GeneCards" id="SPEM3"/>
<dbReference type="HGNC" id="HGNC:53651">
    <property type="gene designation" value="SPEM3"/>
</dbReference>
<dbReference type="HPA" id="ENSG00000283439">
    <property type="expression patterns" value="Tissue enriched (testis)"/>
</dbReference>
<dbReference type="neXtProt" id="NX_A0A1B0GUW6"/>
<dbReference type="VEuPathDB" id="HostDB:ENSG00000283439"/>
<dbReference type="GeneTree" id="ENSGT00940000164517"/>
<dbReference type="InParanoid" id="A0A1B0GUW6"/>
<dbReference type="OMA" id="MPPKINW"/>
<dbReference type="OrthoDB" id="9535405at2759"/>
<dbReference type="PAN-GO" id="A0A1B0GUW6">
    <property type="GO annotations" value="0 GO annotations based on evolutionary models"/>
</dbReference>
<dbReference type="Pharos" id="A0A1B0GUW6">
    <property type="development level" value="Tdark"/>
</dbReference>
<dbReference type="PRO" id="PR:A0A1B0GUW6"/>
<dbReference type="Proteomes" id="UP000005640">
    <property type="component" value="Chromosome 17"/>
</dbReference>
<dbReference type="RNAct" id="A0A1B0GUW6">
    <property type="molecule type" value="protein"/>
</dbReference>
<dbReference type="Bgee" id="ENSG00000283439">
    <property type="expression patterns" value="Expressed in left testis and 19 other cell types or tissues"/>
</dbReference>
<dbReference type="ExpressionAtlas" id="A0A1B0GUW6">
    <property type="expression patterns" value="baseline and differential"/>
</dbReference>
<dbReference type="GO" id="GO:0005737">
    <property type="term" value="C:cytoplasm"/>
    <property type="evidence" value="ECO:0000318"/>
    <property type="project" value="GO_Central"/>
</dbReference>
<dbReference type="GO" id="GO:0016020">
    <property type="term" value="C:membrane"/>
    <property type="evidence" value="ECO:0007669"/>
    <property type="project" value="UniProtKB-SubCell"/>
</dbReference>
<dbReference type="GO" id="GO:0030317">
    <property type="term" value="P:flagellated sperm motility"/>
    <property type="evidence" value="ECO:0000318"/>
    <property type="project" value="GO_Central"/>
</dbReference>
<dbReference type="GO" id="GO:0007291">
    <property type="term" value="P:sperm individualization"/>
    <property type="evidence" value="ECO:0000318"/>
    <property type="project" value="GO_Central"/>
</dbReference>
<dbReference type="PANTHER" id="PTHR34834:SF3">
    <property type="entry name" value="SPEM FAMILY MEMBER 3"/>
    <property type="match status" value="1"/>
</dbReference>
<dbReference type="PANTHER" id="PTHR34834">
    <property type="entry name" value="SPERMATID MATURATION PROTEIN 1"/>
    <property type="match status" value="1"/>
</dbReference>
<evidence type="ECO:0000255" key="1"/>
<evidence type="ECO:0000256" key="2">
    <source>
        <dbReference type="SAM" id="MobiDB-lite"/>
    </source>
</evidence>
<evidence type="ECO:0000305" key="3"/>
<evidence type="ECO:0000312" key="4">
    <source>
        <dbReference type="HGNC" id="HGNC:53651"/>
    </source>
</evidence>
<gene>
    <name evidence="4" type="primary">SPEM3</name>
</gene>
<reference key="1">
    <citation type="journal article" date="2006" name="Nature">
        <title>DNA sequence of human chromosome 17 and analysis of rearrangement in the human lineage.</title>
        <authorList>
            <person name="Zody M.C."/>
            <person name="Garber M."/>
            <person name="Adams D.J."/>
            <person name="Sharpe T."/>
            <person name="Harrow J."/>
            <person name="Lupski J.R."/>
            <person name="Nicholson C."/>
            <person name="Searle S.M."/>
            <person name="Wilming L."/>
            <person name="Young S.K."/>
            <person name="Abouelleil A."/>
            <person name="Allen N.R."/>
            <person name="Bi W."/>
            <person name="Bloom T."/>
            <person name="Borowsky M.L."/>
            <person name="Bugalter B.E."/>
            <person name="Butler J."/>
            <person name="Chang J.L."/>
            <person name="Chen C.-K."/>
            <person name="Cook A."/>
            <person name="Corum B."/>
            <person name="Cuomo C.A."/>
            <person name="de Jong P.J."/>
            <person name="DeCaprio D."/>
            <person name="Dewar K."/>
            <person name="FitzGerald M."/>
            <person name="Gilbert J."/>
            <person name="Gibson R."/>
            <person name="Gnerre S."/>
            <person name="Goldstein S."/>
            <person name="Grafham D.V."/>
            <person name="Grocock R."/>
            <person name="Hafez N."/>
            <person name="Hagopian D.S."/>
            <person name="Hart E."/>
            <person name="Norman C.H."/>
            <person name="Humphray S."/>
            <person name="Jaffe D.B."/>
            <person name="Jones M."/>
            <person name="Kamal M."/>
            <person name="Khodiyar V.K."/>
            <person name="LaButti K."/>
            <person name="Laird G."/>
            <person name="Lehoczky J."/>
            <person name="Liu X."/>
            <person name="Lokyitsang T."/>
            <person name="Loveland J."/>
            <person name="Lui A."/>
            <person name="Macdonald P."/>
            <person name="Major J.E."/>
            <person name="Matthews L."/>
            <person name="Mauceli E."/>
            <person name="McCarroll S.A."/>
            <person name="Mihalev A.H."/>
            <person name="Mudge J."/>
            <person name="Nguyen C."/>
            <person name="Nicol R."/>
            <person name="O'Leary S.B."/>
            <person name="Osoegawa K."/>
            <person name="Schwartz D.C."/>
            <person name="Shaw-Smith C."/>
            <person name="Stankiewicz P."/>
            <person name="Steward C."/>
            <person name="Swarbreck D."/>
            <person name="Venkataraman V."/>
            <person name="Whittaker C.A."/>
            <person name="Yang X."/>
            <person name="Zimmer A.R."/>
            <person name="Bradley A."/>
            <person name="Hubbard T."/>
            <person name="Birren B.W."/>
            <person name="Rogers J."/>
            <person name="Lander E.S."/>
            <person name="Nusbaum C."/>
        </authorList>
    </citation>
    <scope>NUCLEOTIDE SEQUENCE [LARGE SCALE GENOMIC DNA]</scope>
</reference>
<proteinExistence type="evidence at protein level"/>
<feature type="chain" id="PRO_0000443446" description="Uncharacterized protein SPEM3">
    <location>
        <begin position="1"/>
        <end position="1196"/>
    </location>
</feature>
<feature type="transmembrane region" description="Helical" evidence="1">
    <location>
        <begin position="27"/>
        <end position="47"/>
    </location>
</feature>
<feature type="region of interest" description="Disordered" evidence="2">
    <location>
        <begin position="150"/>
        <end position="345"/>
    </location>
</feature>
<feature type="region of interest" description="Disordered" evidence="2">
    <location>
        <begin position="367"/>
        <end position="402"/>
    </location>
</feature>
<feature type="region of interest" description="Disordered" evidence="2">
    <location>
        <begin position="669"/>
        <end position="762"/>
    </location>
</feature>
<feature type="region of interest" description="Disordered" evidence="2">
    <location>
        <begin position="775"/>
        <end position="806"/>
    </location>
</feature>
<feature type="region of interest" description="Disordered" evidence="2">
    <location>
        <begin position="826"/>
        <end position="877"/>
    </location>
</feature>
<feature type="region of interest" description="Disordered" evidence="2">
    <location>
        <begin position="960"/>
        <end position="1009"/>
    </location>
</feature>
<feature type="region of interest" description="Disordered" evidence="2">
    <location>
        <begin position="1168"/>
        <end position="1196"/>
    </location>
</feature>
<feature type="compositionally biased region" description="Polar residues" evidence="2">
    <location>
        <begin position="157"/>
        <end position="177"/>
    </location>
</feature>
<feature type="compositionally biased region" description="Low complexity" evidence="2">
    <location>
        <begin position="212"/>
        <end position="227"/>
    </location>
</feature>
<feature type="compositionally biased region" description="Low complexity" evidence="2">
    <location>
        <begin position="253"/>
        <end position="279"/>
    </location>
</feature>
<feature type="compositionally biased region" description="Polar residues" evidence="2">
    <location>
        <begin position="299"/>
        <end position="321"/>
    </location>
</feature>
<feature type="compositionally biased region" description="Pro residues" evidence="2">
    <location>
        <begin position="391"/>
        <end position="402"/>
    </location>
</feature>
<feature type="compositionally biased region" description="Polar residues" evidence="2">
    <location>
        <begin position="733"/>
        <end position="742"/>
    </location>
</feature>
<feature type="compositionally biased region" description="Polar residues" evidence="2">
    <location>
        <begin position="750"/>
        <end position="762"/>
    </location>
</feature>
<feature type="compositionally biased region" description="Polar residues" evidence="2">
    <location>
        <begin position="787"/>
        <end position="804"/>
    </location>
</feature>
<feature type="compositionally biased region" description="Polar residues" evidence="2">
    <location>
        <begin position="826"/>
        <end position="849"/>
    </location>
</feature>
<feature type="compositionally biased region" description="Basic and acidic residues" evidence="2">
    <location>
        <begin position="962"/>
        <end position="971"/>
    </location>
</feature>